<accession>O28474</accession>
<comment type="subcellular location">
    <subcellularLocation>
        <location evidence="2">Cell membrane</location>
        <topology evidence="2">Multi-pass membrane protein</topology>
    </subcellularLocation>
</comment>
<comment type="similarity">
    <text evidence="2">Belongs to the autoinducer-2 exporter (AI-2E) (TC 2.A.86) family.</text>
</comment>
<evidence type="ECO:0000255" key="1"/>
<evidence type="ECO:0000305" key="2"/>
<proteinExistence type="inferred from homology"/>
<dbReference type="EMBL" id="AE000782">
    <property type="protein sequence ID" value="AAB89447.1"/>
    <property type="molecule type" value="Genomic_DNA"/>
</dbReference>
<dbReference type="PIR" id="G69474">
    <property type="entry name" value="G69474"/>
</dbReference>
<dbReference type="RefSeq" id="WP_010879296.1">
    <property type="nucleotide sequence ID" value="NC_000917.1"/>
</dbReference>
<dbReference type="SMR" id="O28474"/>
<dbReference type="STRING" id="224325.AF_1800"/>
<dbReference type="PaxDb" id="224325-AF_1800"/>
<dbReference type="DNASU" id="1485023"/>
<dbReference type="EnsemblBacteria" id="AAB89447">
    <property type="protein sequence ID" value="AAB89447"/>
    <property type="gene ID" value="AF_1800"/>
</dbReference>
<dbReference type="KEGG" id="afu:AF_1800"/>
<dbReference type="eggNOG" id="arCOG02642">
    <property type="taxonomic scope" value="Archaea"/>
</dbReference>
<dbReference type="HOGENOM" id="CLU_041771_3_0_2"/>
<dbReference type="OrthoDB" id="137390at2157"/>
<dbReference type="PhylomeDB" id="O28474"/>
<dbReference type="Proteomes" id="UP000002199">
    <property type="component" value="Chromosome"/>
</dbReference>
<dbReference type="GO" id="GO:0005886">
    <property type="term" value="C:plasma membrane"/>
    <property type="evidence" value="ECO:0007669"/>
    <property type="project" value="UniProtKB-SubCell"/>
</dbReference>
<dbReference type="InterPro" id="IPR002549">
    <property type="entry name" value="AI-2E-like"/>
</dbReference>
<dbReference type="PANTHER" id="PTHR21716">
    <property type="entry name" value="TRANSMEMBRANE PROTEIN"/>
    <property type="match status" value="1"/>
</dbReference>
<dbReference type="PANTHER" id="PTHR21716:SF4">
    <property type="entry name" value="TRANSMEMBRANE PROTEIN 245"/>
    <property type="match status" value="1"/>
</dbReference>
<dbReference type="Pfam" id="PF01594">
    <property type="entry name" value="AI-2E_transport"/>
    <property type="match status" value="1"/>
</dbReference>
<organism>
    <name type="scientific">Archaeoglobus fulgidus (strain ATCC 49558 / DSM 4304 / JCM 9628 / NBRC 100126 / VC-16)</name>
    <dbReference type="NCBI Taxonomy" id="224325"/>
    <lineage>
        <taxon>Archaea</taxon>
        <taxon>Methanobacteriati</taxon>
        <taxon>Methanobacteriota</taxon>
        <taxon>Archaeoglobi</taxon>
        <taxon>Archaeoglobales</taxon>
        <taxon>Archaeoglobaceae</taxon>
        <taxon>Archaeoglobus</taxon>
    </lineage>
</organism>
<gene>
    <name type="ordered locus">AF_1800</name>
</gene>
<feature type="chain" id="PRO_0000148325" description="Putative transport protein AF_1800">
    <location>
        <begin position="1"/>
        <end position="340"/>
    </location>
</feature>
<feature type="transmembrane region" description="Helical" evidence="1">
    <location>
        <begin position="7"/>
        <end position="27"/>
    </location>
</feature>
<feature type="transmembrane region" description="Helical" evidence="1">
    <location>
        <begin position="57"/>
        <end position="77"/>
    </location>
</feature>
<feature type="transmembrane region" description="Helical" evidence="1">
    <location>
        <begin position="140"/>
        <end position="160"/>
    </location>
</feature>
<feature type="transmembrane region" description="Helical" evidence="1">
    <location>
        <begin position="193"/>
        <end position="213"/>
    </location>
</feature>
<feature type="transmembrane region" description="Helical" evidence="1">
    <location>
        <begin position="225"/>
        <end position="245"/>
    </location>
</feature>
<feature type="transmembrane region" description="Helical" evidence="1">
    <location>
        <begin position="260"/>
        <end position="280"/>
    </location>
</feature>
<feature type="transmembrane region" description="Helical" evidence="1">
    <location>
        <begin position="290"/>
        <end position="310"/>
    </location>
</feature>
<protein>
    <recommendedName>
        <fullName>Putative transport protein AF_1800</fullName>
    </recommendedName>
</protein>
<keyword id="KW-1003">Cell membrane</keyword>
<keyword id="KW-0472">Membrane</keyword>
<keyword id="KW-1185">Reference proteome</keyword>
<keyword id="KW-0812">Transmembrane</keyword>
<keyword id="KW-1133">Transmembrane helix</keyword>
<keyword id="KW-0813">Transport</keyword>
<name>Y1800_ARCFU</name>
<reference key="1">
    <citation type="journal article" date="1997" name="Nature">
        <title>The complete genome sequence of the hyperthermophilic, sulphate-reducing archaeon Archaeoglobus fulgidus.</title>
        <authorList>
            <person name="Klenk H.-P."/>
            <person name="Clayton R.A."/>
            <person name="Tomb J.-F."/>
            <person name="White O."/>
            <person name="Nelson K.E."/>
            <person name="Ketchum K.A."/>
            <person name="Dodson R.J."/>
            <person name="Gwinn M.L."/>
            <person name="Hickey E.K."/>
            <person name="Peterson J.D."/>
            <person name="Richardson D.L."/>
            <person name="Kerlavage A.R."/>
            <person name="Graham D.E."/>
            <person name="Kyrpides N.C."/>
            <person name="Fleischmann R.D."/>
            <person name="Quackenbush J."/>
            <person name="Lee N.H."/>
            <person name="Sutton G.G."/>
            <person name="Gill S.R."/>
            <person name="Kirkness E.F."/>
            <person name="Dougherty B.A."/>
            <person name="McKenney K."/>
            <person name="Adams M.D."/>
            <person name="Loftus B.J."/>
            <person name="Peterson S.N."/>
            <person name="Reich C.I."/>
            <person name="McNeil L.K."/>
            <person name="Badger J.H."/>
            <person name="Glodek A."/>
            <person name="Zhou L."/>
            <person name="Overbeek R."/>
            <person name="Gocayne J.D."/>
            <person name="Weidman J.F."/>
            <person name="McDonald L.A."/>
            <person name="Utterback T.R."/>
            <person name="Cotton M.D."/>
            <person name="Spriggs T."/>
            <person name="Artiach P."/>
            <person name="Kaine B.P."/>
            <person name="Sykes S.M."/>
            <person name="Sadow P.W."/>
            <person name="D'Andrea K.P."/>
            <person name="Bowman C."/>
            <person name="Fujii C."/>
            <person name="Garland S.A."/>
            <person name="Mason T.M."/>
            <person name="Olsen G.J."/>
            <person name="Fraser C.M."/>
            <person name="Smith H.O."/>
            <person name="Woese C.R."/>
            <person name="Venter J.C."/>
        </authorList>
    </citation>
    <scope>NUCLEOTIDE SEQUENCE [LARGE SCALE GENOMIC DNA]</scope>
    <source>
        <strain>ATCC 49558 / DSM 4304 / JCM 9628 / NBRC 100126 / VC-16</strain>
    </source>
</reference>
<sequence>MNKYWTLVLLLSILVVLALTFYFFTPLLDGIVMGVVFAYVAKPVKRKIEHVGRIKASVIATAIVILPISVLMFYGLIQGLNQAIYLITHYKVIESGILNILSKMGIEEGEEYVKWITSNVFSILQSSIQPSAVEITKKATLLILNFFISIVVCFYALADMENFVRRTTSVVPEDRRDEFRRFVEEIDVTFESLWFGNFVVAILIGLVSLPFFLYFNVPFAPLLSGLMFLAALIPIFAEWMIILPVSLYLLLVDVGRGLSFLLIGVVFLYVLPELILRPYFVGYTSKIHPLVLMLAFIGGGLVGGISGFFIAPMIVGLATAIYNYYTKEELATENHDPESV</sequence>